<protein>
    <recommendedName>
        <fullName evidence="1">Anhydro-N-acetylmuramic acid kinase</fullName>
        <ecNumber evidence="1">2.7.1.170</ecNumber>
    </recommendedName>
    <alternativeName>
        <fullName evidence="1">AnhMurNAc kinase</fullName>
    </alternativeName>
</protein>
<keyword id="KW-0067">ATP-binding</keyword>
<keyword id="KW-0119">Carbohydrate metabolism</keyword>
<keyword id="KW-0418">Kinase</keyword>
<keyword id="KW-0547">Nucleotide-binding</keyword>
<keyword id="KW-1185">Reference proteome</keyword>
<keyword id="KW-0808">Transferase</keyword>
<gene>
    <name evidence="1" type="primary">anmK</name>
    <name type="ordered locus">TM1040_0924</name>
</gene>
<reference key="1">
    <citation type="submission" date="2006-05" db="EMBL/GenBank/DDBJ databases">
        <title>Complete sequence of chromosome of Silicibacter sp. TM1040.</title>
        <authorList>
            <consortium name="US DOE Joint Genome Institute"/>
            <person name="Copeland A."/>
            <person name="Lucas S."/>
            <person name="Lapidus A."/>
            <person name="Barry K."/>
            <person name="Detter J.C."/>
            <person name="Glavina del Rio T."/>
            <person name="Hammon N."/>
            <person name="Israni S."/>
            <person name="Dalin E."/>
            <person name="Tice H."/>
            <person name="Pitluck S."/>
            <person name="Brettin T."/>
            <person name="Bruce D."/>
            <person name="Han C."/>
            <person name="Tapia R."/>
            <person name="Goodwin L."/>
            <person name="Thompson L.S."/>
            <person name="Gilna P."/>
            <person name="Schmutz J."/>
            <person name="Larimer F."/>
            <person name="Land M."/>
            <person name="Hauser L."/>
            <person name="Kyrpides N."/>
            <person name="Kim E."/>
            <person name="Belas R."/>
            <person name="Moran M.A."/>
            <person name="Buchan A."/>
            <person name="Gonzalez J.M."/>
            <person name="Schell M.A."/>
            <person name="Sun F."/>
            <person name="Richardson P."/>
        </authorList>
    </citation>
    <scope>NUCLEOTIDE SEQUENCE [LARGE SCALE GENOMIC DNA]</scope>
    <source>
        <strain>TM1040</strain>
    </source>
</reference>
<comment type="function">
    <text evidence="1">Catalyzes the specific phosphorylation of 1,6-anhydro-N-acetylmuramic acid (anhMurNAc) with the simultaneous cleavage of the 1,6-anhydro ring, generating MurNAc-6-P. Is required for the utilization of anhMurNAc either imported from the medium or derived from its own cell wall murein, and thus plays a role in cell wall recycling.</text>
</comment>
<comment type="catalytic activity">
    <reaction evidence="1">
        <text>1,6-anhydro-N-acetyl-beta-muramate + ATP + H2O = N-acetyl-D-muramate 6-phosphate + ADP + H(+)</text>
        <dbReference type="Rhea" id="RHEA:24952"/>
        <dbReference type="ChEBI" id="CHEBI:15377"/>
        <dbReference type="ChEBI" id="CHEBI:15378"/>
        <dbReference type="ChEBI" id="CHEBI:30616"/>
        <dbReference type="ChEBI" id="CHEBI:58690"/>
        <dbReference type="ChEBI" id="CHEBI:58722"/>
        <dbReference type="ChEBI" id="CHEBI:456216"/>
        <dbReference type="EC" id="2.7.1.170"/>
    </reaction>
</comment>
<comment type="pathway">
    <text evidence="1">Amino-sugar metabolism; 1,6-anhydro-N-acetylmuramate degradation.</text>
</comment>
<comment type="pathway">
    <text evidence="1">Cell wall biogenesis; peptidoglycan recycling.</text>
</comment>
<comment type="similarity">
    <text evidence="1">Belongs to the anhydro-N-acetylmuramic acid kinase family.</text>
</comment>
<dbReference type="EC" id="2.7.1.170" evidence="1"/>
<dbReference type="EMBL" id="CP000377">
    <property type="protein sequence ID" value="ABF63657.1"/>
    <property type="molecule type" value="Genomic_DNA"/>
</dbReference>
<dbReference type="RefSeq" id="WP_011538267.1">
    <property type="nucleotide sequence ID" value="NC_008044.1"/>
</dbReference>
<dbReference type="SMR" id="Q1GI59"/>
<dbReference type="STRING" id="292414.TM1040_0924"/>
<dbReference type="KEGG" id="sit:TM1040_0924"/>
<dbReference type="eggNOG" id="COG2377">
    <property type="taxonomic scope" value="Bacteria"/>
</dbReference>
<dbReference type="HOGENOM" id="CLU_038782_3_0_5"/>
<dbReference type="OrthoDB" id="9763949at2"/>
<dbReference type="UniPathway" id="UPA00343"/>
<dbReference type="UniPathway" id="UPA00544"/>
<dbReference type="Proteomes" id="UP000000636">
    <property type="component" value="Chromosome"/>
</dbReference>
<dbReference type="GO" id="GO:0005524">
    <property type="term" value="F:ATP binding"/>
    <property type="evidence" value="ECO:0007669"/>
    <property type="project" value="UniProtKB-UniRule"/>
</dbReference>
<dbReference type="GO" id="GO:0016301">
    <property type="term" value="F:kinase activity"/>
    <property type="evidence" value="ECO:0007669"/>
    <property type="project" value="UniProtKB-KW"/>
</dbReference>
<dbReference type="GO" id="GO:0016773">
    <property type="term" value="F:phosphotransferase activity, alcohol group as acceptor"/>
    <property type="evidence" value="ECO:0007669"/>
    <property type="project" value="UniProtKB-UniRule"/>
</dbReference>
<dbReference type="GO" id="GO:0097175">
    <property type="term" value="P:1,6-anhydro-N-acetyl-beta-muramic acid catabolic process"/>
    <property type="evidence" value="ECO:0007669"/>
    <property type="project" value="UniProtKB-UniRule"/>
</dbReference>
<dbReference type="GO" id="GO:0006040">
    <property type="term" value="P:amino sugar metabolic process"/>
    <property type="evidence" value="ECO:0007669"/>
    <property type="project" value="InterPro"/>
</dbReference>
<dbReference type="GO" id="GO:0009254">
    <property type="term" value="P:peptidoglycan turnover"/>
    <property type="evidence" value="ECO:0007669"/>
    <property type="project" value="UniProtKB-UniRule"/>
</dbReference>
<dbReference type="Gene3D" id="3.30.420.40">
    <property type="match status" value="2"/>
</dbReference>
<dbReference type="HAMAP" id="MF_01270">
    <property type="entry name" value="AnhMurNAc_kinase"/>
    <property type="match status" value="1"/>
</dbReference>
<dbReference type="InterPro" id="IPR005338">
    <property type="entry name" value="Anhydro_N_Ac-Mur_kinase"/>
</dbReference>
<dbReference type="InterPro" id="IPR043129">
    <property type="entry name" value="ATPase_NBD"/>
</dbReference>
<dbReference type="NCBIfam" id="NF007141">
    <property type="entry name" value="PRK09585.1-5"/>
    <property type="match status" value="1"/>
</dbReference>
<dbReference type="PANTHER" id="PTHR30605">
    <property type="entry name" value="ANHYDRO-N-ACETYLMURAMIC ACID KINASE"/>
    <property type="match status" value="1"/>
</dbReference>
<dbReference type="PANTHER" id="PTHR30605:SF0">
    <property type="entry name" value="ANHYDRO-N-ACETYLMURAMIC ACID KINASE"/>
    <property type="match status" value="1"/>
</dbReference>
<dbReference type="Pfam" id="PF03702">
    <property type="entry name" value="AnmK"/>
    <property type="match status" value="1"/>
</dbReference>
<dbReference type="SUPFAM" id="SSF53067">
    <property type="entry name" value="Actin-like ATPase domain"/>
    <property type="match status" value="1"/>
</dbReference>
<evidence type="ECO:0000255" key="1">
    <source>
        <dbReference type="HAMAP-Rule" id="MF_01270"/>
    </source>
</evidence>
<name>ANMK_RUEST</name>
<sequence>MGRAISKSGPVRALGAMSGTSLDGVDVAVLETDGRDILGFGETGYRAYSDAEREVLRAALGQWTGDAVAAAARVVEAAHIEVMTDHADVDLIGFHGQTVAHAPRLQGTLQVGDGGVLAEALGRPVVWDFRSDDVSMGGEGAPLAPFFHHACARYIGATEPLCFLNLGGVGNVTYVDPRKARPEDEGALLAFDTGPANAPINDFLQSRLGLAMDEGGRIASGGAVENGALELFLAEPYFARMPPKSLDRNDFPEMIGLVTELSDADATATLTAMCAAAVAQGMEHCPKAPSKVLVTGGGRHNPVLMEMLRVSLDCPVEPVETVGLDGDMLEAQAFAYLAVRVARGLPTSAPSTTGVRACVGGGTVTVPEGWTARKT</sequence>
<accession>Q1GI59</accession>
<feature type="chain" id="PRO_0000250063" description="Anhydro-N-acetylmuramic acid kinase">
    <location>
        <begin position="1"/>
        <end position="375"/>
    </location>
</feature>
<feature type="binding site" evidence="1">
    <location>
        <begin position="19"/>
        <end position="26"/>
    </location>
    <ligand>
        <name>ATP</name>
        <dbReference type="ChEBI" id="CHEBI:30616"/>
    </ligand>
</feature>
<proteinExistence type="inferred from homology"/>
<organism>
    <name type="scientific">Ruegeria sp. (strain TM1040)</name>
    <name type="common">Silicibacter sp.</name>
    <dbReference type="NCBI Taxonomy" id="292414"/>
    <lineage>
        <taxon>Bacteria</taxon>
        <taxon>Pseudomonadati</taxon>
        <taxon>Pseudomonadota</taxon>
        <taxon>Alphaproteobacteria</taxon>
        <taxon>Rhodobacterales</taxon>
        <taxon>Roseobacteraceae</taxon>
        <taxon>Ruegeria</taxon>
    </lineage>
</organism>